<accession>Q5L5H6</accession>
<keyword id="KW-0963">Cytoplasm</keyword>
<keyword id="KW-0251">Elongation factor</keyword>
<keyword id="KW-0342">GTP-binding</keyword>
<keyword id="KW-0378">Hydrolase</keyword>
<keyword id="KW-0460">Magnesium</keyword>
<keyword id="KW-0479">Metal-binding</keyword>
<keyword id="KW-0547">Nucleotide-binding</keyword>
<keyword id="KW-0648">Protein biosynthesis</keyword>
<feature type="chain" id="PRO_1000015633" description="Elongation factor Tu">
    <location>
        <begin position="1"/>
        <end position="394"/>
    </location>
</feature>
<feature type="domain" description="tr-type G">
    <location>
        <begin position="10"/>
        <end position="204"/>
    </location>
</feature>
<feature type="region of interest" description="G1" evidence="1">
    <location>
        <begin position="19"/>
        <end position="26"/>
    </location>
</feature>
<feature type="region of interest" description="G2" evidence="1">
    <location>
        <begin position="60"/>
        <end position="64"/>
    </location>
</feature>
<feature type="region of interest" description="G3" evidence="1">
    <location>
        <begin position="81"/>
        <end position="84"/>
    </location>
</feature>
<feature type="region of interest" description="G4" evidence="1">
    <location>
        <begin position="136"/>
        <end position="139"/>
    </location>
</feature>
<feature type="region of interest" description="G5" evidence="1">
    <location>
        <begin position="174"/>
        <end position="176"/>
    </location>
</feature>
<feature type="binding site" evidence="2">
    <location>
        <begin position="19"/>
        <end position="26"/>
    </location>
    <ligand>
        <name>GTP</name>
        <dbReference type="ChEBI" id="CHEBI:37565"/>
    </ligand>
</feature>
<feature type="binding site" evidence="2">
    <location>
        <position position="26"/>
    </location>
    <ligand>
        <name>Mg(2+)</name>
        <dbReference type="ChEBI" id="CHEBI:18420"/>
    </ligand>
</feature>
<feature type="binding site" evidence="2">
    <location>
        <begin position="81"/>
        <end position="85"/>
    </location>
    <ligand>
        <name>GTP</name>
        <dbReference type="ChEBI" id="CHEBI:37565"/>
    </ligand>
</feature>
<feature type="binding site" evidence="2">
    <location>
        <begin position="136"/>
        <end position="139"/>
    </location>
    <ligand>
        <name>GTP</name>
        <dbReference type="ChEBI" id="CHEBI:37565"/>
    </ligand>
</feature>
<organism>
    <name type="scientific">Chlamydia abortus (strain DSM 27085 / S26/3)</name>
    <name type="common">Chlamydophila abortus</name>
    <dbReference type="NCBI Taxonomy" id="218497"/>
    <lineage>
        <taxon>Bacteria</taxon>
        <taxon>Pseudomonadati</taxon>
        <taxon>Chlamydiota</taxon>
        <taxon>Chlamydiia</taxon>
        <taxon>Chlamydiales</taxon>
        <taxon>Chlamydiaceae</taxon>
        <taxon>Chlamydia/Chlamydophila group</taxon>
        <taxon>Chlamydia</taxon>
    </lineage>
</organism>
<name>EFTU_CHLAB</name>
<evidence type="ECO:0000250" key="1"/>
<evidence type="ECO:0000255" key="2">
    <source>
        <dbReference type="HAMAP-Rule" id="MF_00118"/>
    </source>
</evidence>
<comment type="function">
    <text evidence="2">GTP hydrolase that promotes the GTP-dependent binding of aminoacyl-tRNA to the A-site of ribosomes during protein biosynthesis.</text>
</comment>
<comment type="catalytic activity">
    <reaction evidence="2">
        <text>GTP + H2O = GDP + phosphate + H(+)</text>
        <dbReference type="Rhea" id="RHEA:19669"/>
        <dbReference type="ChEBI" id="CHEBI:15377"/>
        <dbReference type="ChEBI" id="CHEBI:15378"/>
        <dbReference type="ChEBI" id="CHEBI:37565"/>
        <dbReference type="ChEBI" id="CHEBI:43474"/>
        <dbReference type="ChEBI" id="CHEBI:58189"/>
        <dbReference type="EC" id="3.6.5.3"/>
    </reaction>
    <physiologicalReaction direction="left-to-right" evidence="2">
        <dbReference type="Rhea" id="RHEA:19670"/>
    </physiologicalReaction>
</comment>
<comment type="subunit">
    <text evidence="2">Monomer.</text>
</comment>
<comment type="subcellular location">
    <subcellularLocation>
        <location evidence="2">Cytoplasm</location>
    </subcellularLocation>
</comment>
<comment type="similarity">
    <text evidence="2">Belongs to the TRAFAC class translation factor GTPase superfamily. Classic translation factor GTPase family. EF-Tu/EF-1A subfamily.</text>
</comment>
<sequence length="394" mass="43213">MSKETFQRTKPHINIGTIGHVDHGKTTLTAAITRALSAEGLANFCDYSSIDNTPEEKARGITINASHVEYETPNRHYAHVDCPGHADYVKNMITGAAQMDGAILVVSATDGAMPQTKEHILLARQVGVPYIVVFLNKIDMISQEDAELVDLVEMELSELLEEKGYKGCPIIRGSALKALEGDASYVEKIRELMQAVDDNIPTPEREVDKPFLMPIEDVFSISGRGTVVTGRIERGVVKVGDKVQIVGLRDTRETIVTGVEMFRKELPEGQAGENVGLLLRGIGKNDVERGMVICQPNSVKSHTQFKGTVYILQKEEGGRHKPFFTGYRPQFFFRTTDVTGVVTLPEGVEMVMPGDNVEFDVQLISPVALEEGMRFAIREGGRTIGAGTISKIIA</sequence>
<dbReference type="EC" id="3.6.5.3" evidence="2"/>
<dbReference type="EMBL" id="CR848038">
    <property type="protein sequence ID" value="CAH64115.1"/>
    <property type="molecule type" value="Genomic_DNA"/>
</dbReference>
<dbReference type="RefSeq" id="WP_006343364.1">
    <property type="nucleotide sequence ID" value="NC_004552.2"/>
</dbReference>
<dbReference type="SMR" id="Q5L5H6"/>
<dbReference type="GeneID" id="93024219"/>
<dbReference type="KEGG" id="cab:CAB668"/>
<dbReference type="eggNOG" id="COG0050">
    <property type="taxonomic scope" value="Bacteria"/>
</dbReference>
<dbReference type="HOGENOM" id="CLU_007265_0_1_0"/>
<dbReference type="OrthoDB" id="9804504at2"/>
<dbReference type="Proteomes" id="UP000001012">
    <property type="component" value="Chromosome"/>
</dbReference>
<dbReference type="GO" id="GO:0005829">
    <property type="term" value="C:cytosol"/>
    <property type="evidence" value="ECO:0007669"/>
    <property type="project" value="TreeGrafter"/>
</dbReference>
<dbReference type="GO" id="GO:0005525">
    <property type="term" value="F:GTP binding"/>
    <property type="evidence" value="ECO:0007669"/>
    <property type="project" value="UniProtKB-UniRule"/>
</dbReference>
<dbReference type="GO" id="GO:0003924">
    <property type="term" value="F:GTPase activity"/>
    <property type="evidence" value="ECO:0007669"/>
    <property type="project" value="InterPro"/>
</dbReference>
<dbReference type="GO" id="GO:0003746">
    <property type="term" value="F:translation elongation factor activity"/>
    <property type="evidence" value="ECO:0007669"/>
    <property type="project" value="UniProtKB-UniRule"/>
</dbReference>
<dbReference type="CDD" id="cd01884">
    <property type="entry name" value="EF_Tu"/>
    <property type="match status" value="1"/>
</dbReference>
<dbReference type="CDD" id="cd03697">
    <property type="entry name" value="EFTU_II"/>
    <property type="match status" value="1"/>
</dbReference>
<dbReference type="CDD" id="cd03707">
    <property type="entry name" value="EFTU_III"/>
    <property type="match status" value="1"/>
</dbReference>
<dbReference type="FunFam" id="2.40.30.10:FF:000002">
    <property type="entry name" value="Elongation factor Tu"/>
    <property type="match status" value="1"/>
</dbReference>
<dbReference type="FunFam" id="3.40.50.300:FF:000003">
    <property type="entry name" value="Elongation factor Tu"/>
    <property type="match status" value="1"/>
</dbReference>
<dbReference type="FunFam" id="2.40.30.10:FF:000020">
    <property type="entry name" value="Translation elongation factor EF-1"/>
    <property type="match status" value="1"/>
</dbReference>
<dbReference type="Gene3D" id="3.40.50.300">
    <property type="entry name" value="P-loop containing nucleotide triphosphate hydrolases"/>
    <property type="match status" value="1"/>
</dbReference>
<dbReference type="Gene3D" id="2.40.30.10">
    <property type="entry name" value="Translation factors"/>
    <property type="match status" value="2"/>
</dbReference>
<dbReference type="HAMAP" id="MF_00118_B">
    <property type="entry name" value="EF_Tu_B"/>
    <property type="match status" value="1"/>
</dbReference>
<dbReference type="InterPro" id="IPR041709">
    <property type="entry name" value="EF-Tu_GTP-bd"/>
</dbReference>
<dbReference type="InterPro" id="IPR050055">
    <property type="entry name" value="EF-Tu_GTPase"/>
</dbReference>
<dbReference type="InterPro" id="IPR004161">
    <property type="entry name" value="EFTu-like_2"/>
</dbReference>
<dbReference type="InterPro" id="IPR033720">
    <property type="entry name" value="EFTU_2"/>
</dbReference>
<dbReference type="InterPro" id="IPR031157">
    <property type="entry name" value="G_TR_CS"/>
</dbReference>
<dbReference type="InterPro" id="IPR027417">
    <property type="entry name" value="P-loop_NTPase"/>
</dbReference>
<dbReference type="InterPro" id="IPR005225">
    <property type="entry name" value="Small_GTP-bd"/>
</dbReference>
<dbReference type="InterPro" id="IPR000795">
    <property type="entry name" value="T_Tr_GTP-bd_dom"/>
</dbReference>
<dbReference type="InterPro" id="IPR009000">
    <property type="entry name" value="Transl_B-barrel_sf"/>
</dbReference>
<dbReference type="InterPro" id="IPR009001">
    <property type="entry name" value="Transl_elong_EF1A/Init_IF2_C"/>
</dbReference>
<dbReference type="InterPro" id="IPR004541">
    <property type="entry name" value="Transl_elong_EFTu/EF1A_bac/org"/>
</dbReference>
<dbReference type="InterPro" id="IPR004160">
    <property type="entry name" value="Transl_elong_EFTu/EF1A_C"/>
</dbReference>
<dbReference type="NCBIfam" id="TIGR00485">
    <property type="entry name" value="EF-Tu"/>
    <property type="match status" value="1"/>
</dbReference>
<dbReference type="NCBIfam" id="NF000766">
    <property type="entry name" value="PRK00049.1"/>
    <property type="match status" value="1"/>
</dbReference>
<dbReference type="NCBIfam" id="NF009372">
    <property type="entry name" value="PRK12735.1"/>
    <property type="match status" value="1"/>
</dbReference>
<dbReference type="NCBIfam" id="NF009373">
    <property type="entry name" value="PRK12736.1"/>
    <property type="match status" value="1"/>
</dbReference>
<dbReference type="NCBIfam" id="TIGR00231">
    <property type="entry name" value="small_GTP"/>
    <property type="match status" value="1"/>
</dbReference>
<dbReference type="PANTHER" id="PTHR43721:SF22">
    <property type="entry name" value="ELONGATION FACTOR TU, MITOCHONDRIAL"/>
    <property type="match status" value="1"/>
</dbReference>
<dbReference type="PANTHER" id="PTHR43721">
    <property type="entry name" value="ELONGATION FACTOR TU-RELATED"/>
    <property type="match status" value="1"/>
</dbReference>
<dbReference type="Pfam" id="PF00009">
    <property type="entry name" value="GTP_EFTU"/>
    <property type="match status" value="1"/>
</dbReference>
<dbReference type="Pfam" id="PF03144">
    <property type="entry name" value="GTP_EFTU_D2"/>
    <property type="match status" value="1"/>
</dbReference>
<dbReference type="Pfam" id="PF03143">
    <property type="entry name" value="GTP_EFTU_D3"/>
    <property type="match status" value="1"/>
</dbReference>
<dbReference type="PRINTS" id="PR00315">
    <property type="entry name" value="ELONGATNFCT"/>
</dbReference>
<dbReference type="SUPFAM" id="SSF50465">
    <property type="entry name" value="EF-Tu/eEF-1alpha/eIF2-gamma C-terminal domain"/>
    <property type="match status" value="1"/>
</dbReference>
<dbReference type="SUPFAM" id="SSF52540">
    <property type="entry name" value="P-loop containing nucleoside triphosphate hydrolases"/>
    <property type="match status" value="1"/>
</dbReference>
<dbReference type="SUPFAM" id="SSF50447">
    <property type="entry name" value="Translation proteins"/>
    <property type="match status" value="1"/>
</dbReference>
<dbReference type="PROSITE" id="PS00301">
    <property type="entry name" value="G_TR_1"/>
    <property type="match status" value="1"/>
</dbReference>
<dbReference type="PROSITE" id="PS51722">
    <property type="entry name" value="G_TR_2"/>
    <property type="match status" value="1"/>
</dbReference>
<proteinExistence type="inferred from homology"/>
<protein>
    <recommendedName>
        <fullName evidence="2">Elongation factor Tu</fullName>
        <shortName evidence="2">EF-Tu</shortName>
        <ecNumber evidence="2">3.6.5.3</ecNumber>
    </recommendedName>
</protein>
<reference key="1">
    <citation type="journal article" date="2005" name="Genome Res.">
        <title>The Chlamydophila abortus genome sequence reveals an array of variable proteins that contribute to interspecies variation.</title>
        <authorList>
            <person name="Thomson N.R."/>
            <person name="Yeats C."/>
            <person name="Bell K."/>
            <person name="Holden M.T.G."/>
            <person name="Bentley S.D."/>
            <person name="Livingstone M."/>
            <person name="Cerdeno-Tarraga A.-M."/>
            <person name="Harris B."/>
            <person name="Doggett J."/>
            <person name="Ormond D."/>
            <person name="Mungall K."/>
            <person name="Clarke K."/>
            <person name="Feltwell T."/>
            <person name="Hance Z."/>
            <person name="Sanders M."/>
            <person name="Quail M.A."/>
            <person name="Price C."/>
            <person name="Barrell B.G."/>
            <person name="Parkhill J."/>
            <person name="Longbottom D."/>
        </authorList>
    </citation>
    <scope>NUCLEOTIDE SEQUENCE [LARGE SCALE GENOMIC DNA]</scope>
    <source>
        <strain>DSM 27085 / S26/3</strain>
    </source>
</reference>
<gene>
    <name evidence="2" type="primary">tuf</name>
    <name type="ordered locus">CAB668</name>
</gene>